<gene>
    <name type="primary">L3</name>
</gene>
<evidence type="ECO:0000255" key="1">
    <source>
        <dbReference type="HAMAP-Rule" id="MF_04110"/>
    </source>
</evidence>
<evidence type="ECO:0000305" key="2"/>
<comment type="function">
    <text evidence="1">Endolysin with lysozyme activity that degrades host peptidoglycans and participates with the holin and spanin proteins in the sequential events which lead to the programmed host cell lysis releasing the mature viral particles. Once the holin has permeabilized the host cell membrane, the endolysin can reach the periplasm and break down the peptidoglycan layer.</text>
</comment>
<comment type="catalytic activity">
    <reaction evidence="1">
        <text>Hydrolysis of (1-&gt;4)-beta-linkages between N-acetylmuramic acid and N-acetyl-D-glucosamine residues in a peptidoglycan and between N-acetyl-D-glucosamine residues in chitodextrins.</text>
        <dbReference type="EC" id="3.2.1.17"/>
    </reaction>
</comment>
<comment type="subcellular location">
    <subcellularLocation>
        <location evidence="1">Host cytoplasm</location>
    </subcellularLocation>
    <text evidence="1">The endolysin is cytoplasmic, but can reach the periplasmic space with the help of the holins which disrupt the host cell membrane.</text>
</comment>
<comment type="miscellaneous">
    <text evidence="2">The bacteriophage lysin is a powerful lytic agent with a narrow target specifically for dairy lactic streptococci.</text>
</comment>
<comment type="similarity">
    <text evidence="1">Belongs to the glycosyl hydrolase 24 family.</text>
</comment>
<comment type="caution">
    <text evidence="1">Lacks the conserved Asp active site.</text>
</comment>
<dbReference type="EC" id="3.2.1.17" evidence="1"/>
<dbReference type="EMBL" id="X16178">
    <property type="protein sequence ID" value="CAA34300.1"/>
    <property type="molecule type" value="Genomic_DNA"/>
</dbReference>
<dbReference type="PIR" id="S05335">
    <property type="entry name" value="S05335"/>
</dbReference>
<dbReference type="SMR" id="P62693"/>
<dbReference type="CAZy" id="GH24">
    <property type="family name" value="Glycoside Hydrolase Family 24"/>
</dbReference>
<dbReference type="GO" id="GO:0030430">
    <property type="term" value="C:host cell cytoplasm"/>
    <property type="evidence" value="ECO:0007669"/>
    <property type="project" value="UniProtKB-SubCell"/>
</dbReference>
<dbReference type="GO" id="GO:0003796">
    <property type="term" value="F:lysozyme activity"/>
    <property type="evidence" value="ECO:0007669"/>
    <property type="project" value="UniProtKB-UniRule"/>
</dbReference>
<dbReference type="GO" id="GO:0016998">
    <property type="term" value="P:cell wall macromolecule catabolic process"/>
    <property type="evidence" value="ECO:0007669"/>
    <property type="project" value="InterPro"/>
</dbReference>
<dbReference type="GO" id="GO:0042742">
    <property type="term" value="P:defense response to bacterium"/>
    <property type="evidence" value="ECO:0007669"/>
    <property type="project" value="UniProtKB-KW"/>
</dbReference>
<dbReference type="GO" id="GO:0009253">
    <property type="term" value="P:peptidoglycan catabolic process"/>
    <property type="evidence" value="ECO:0007669"/>
    <property type="project" value="UniProtKB-UniRule"/>
</dbReference>
<dbReference type="GO" id="GO:0044659">
    <property type="term" value="P:viral release from host cell by cytolysis"/>
    <property type="evidence" value="ECO:0007669"/>
    <property type="project" value="UniProtKB-UniRule"/>
</dbReference>
<dbReference type="CDD" id="cd00737">
    <property type="entry name" value="lyz_endolysin_autolysin"/>
    <property type="match status" value="1"/>
</dbReference>
<dbReference type="Gene3D" id="1.10.530.40">
    <property type="match status" value="1"/>
</dbReference>
<dbReference type="HAMAP" id="MF_04110">
    <property type="entry name" value="ENDOLYSIN_T4"/>
    <property type="match status" value="1"/>
</dbReference>
<dbReference type="InterPro" id="IPR051018">
    <property type="entry name" value="Bacteriophage_GH24"/>
</dbReference>
<dbReference type="InterPro" id="IPR033907">
    <property type="entry name" value="Endolysin_autolysin"/>
</dbReference>
<dbReference type="InterPro" id="IPR034690">
    <property type="entry name" value="Endolysin_T4_type"/>
</dbReference>
<dbReference type="InterPro" id="IPR002196">
    <property type="entry name" value="Glyco_hydro_24"/>
</dbReference>
<dbReference type="InterPro" id="IPR023346">
    <property type="entry name" value="Lysozyme-like_dom_sf"/>
</dbReference>
<dbReference type="InterPro" id="IPR023347">
    <property type="entry name" value="Lysozyme_dom_sf"/>
</dbReference>
<dbReference type="PANTHER" id="PTHR38107">
    <property type="match status" value="1"/>
</dbReference>
<dbReference type="PANTHER" id="PTHR38107:SF3">
    <property type="entry name" value="LYSOZYME RRRD-RELATED"/>
    <property type="match status" value="1"/>
</dbReference>
<dbReference type="Pfam" id="PF00959">
    <property type="entry name" value="Phage_lysozyme"/>
    <property type="match status" value="1"/>
</dbReference>
<dbReference type="SUPFAM" id="SSF53955">
    <property type="entry name" value="Lysozyme-like"/>
    <property type="match status" value="1"/>
</dbReference>
<sequence>MKVSQNGLNLIKEFEGCRLTAYKPVPWEQMYTIGWGHYGVTAGTTWTQAQADSQLEIDINNKYAPMVDAYVKGKANQNEFDALVSLAYNCGNVFVADGWAPFSHAYCASMIPKYRNAGGQVLQGLVRRRQAELNLFNKPVSSNSNQNNQTGGMIKMYLIIGLDNSGKAKHWYVSDGVSVRHVRTIRMLENYQNKWAKLNLPVDTMFIAEIEAEFGRKIDMASGEVK</sequence>
<organism>
    <name type="scientific">Lactococcus phage phivML3</name>
    <name type="common">Lactococcus bacteriophage phi-vML3</name>
    <dbReference type="NCBI Taxonomy" id="10746"/>
    <lineage>
        <taxon>Viruses</taxon>
        <taxon>Duplodnaviria</taxon>
        <taxon>Heunggongvirae</taxon>
        <taxon>Uroviricota</taxon>
        <taxon>Caudoviricetes</taxon>
    </lineage>
</organism>
<feature type="chain" id="PRO_0000218095" description="Endolysin">
    <location>
        <begin position="1"/>
        <end position="226"/>
    </location>
</feature>
<feature type="active site" description="Proton donor/acceptor" evidence="1">
    <location>
        <position position="15"/>
    </location>
</feature>
<protein>
    <recommendedName>
        <fullName evidence="1">Endolysin</fullName>
        <ecNumber evidence="1">3.2.1.17</ecNumber>
    </recommendedName>
    <alternativeName>
        <fullName evidence="1">Lysis protein</fullName>
    </alternativeName>
    <alternativeName>
        <fullName evidence="1">Lysozyme</fullName>
    </alternativeName>
    <alternativeName>
        <fullName evidence="1">Muramidase</fullName>
    </alternativeName>
</protein>
<proteinExistence type="inferred from homology"/>
<name>ENLYS_BPPHV</name>
<keyword id="KW-0929">Antimicrobial</keyword>
<keyword id="KW-0081">Bacteriolytic enzyme</keyword>
<keyword id="KW-0204">Cytolysis</keyword>
<keyword id="KW-0326">Glycosidase</keyword>
<keyword id="KW-0578">Host cell lysis by virus</keyword>
<keyword id="KW-1035">Host cytoplasm</keyword>
<keyword id="KW-0378">Hydrolase</keyword>
<keyword id="KW-1188">Viral release from host cell</keyword>
<reference key="1">
    <citation type="journal article" date="1989" name="Mol. Gen. Genet.">
        <title>Cloning and DNA sequence analysis of a Lactococcus bacteriophage lysin gene.</title>
        <authorList>
            <person name="Shearman C.A."/>
            <person name="Underwood H."/>
            <person name="Jury K."/>
            <person name="Gasson M."/>
        </authorList>
    </citation>
    <scope>NUCLEOTIDE SEQUENCE [GENOMIC DNA]</scope>
</reference>
<reference key="2">
    <citation type="submission" date="1993-12" db="EMBL/GenBank/DDBJ databases">
        <authorList>
            <person name="Shearman C.A."/>
        </authorList>
    </citation>
    <scope>SEQUENCE REVISION</scope>
</reference>
<accession>P62693</accession>
<accession>P13003</accession>
<accession>Q38298</accession>
<accession>Q38562</accession>
<accession>Q38651</accession>
<organismHost>
    <name type="scientific">Lactococcus lactis</name>
    <dbReference type="NCBI Taxonomy" id="1358"/>
</organismHost>